<reference key="1">
    <citation type="submission" date="2006-09" db="EMBL/GenBank/DDBJ databases">
        <title>Cloning and analysis of the Porphyra yezoensis gene for rpl14.</title>
        <authorList>
            <person name="Wang M.Q."/>
            <person name="Mao Y.X."/>
        </authorList>
    </citation>
    <scope>NUCLEOTIDE SEQUENCE [GENOMIC DNA]</scope>
    <source>
        <strain>Qingdao</strain>
    </source>
</reference>
<reference key="2">
    <citation type="submission" date="2003-11" db="EMBL/GenBank/DDBJ databases">
        <title>Whole genome sequence of Porphyra yezoensis chloroplast.</title>
        <authorList>
            <person name="Kunimoto M."/>
            <person name="Morishima K."/>
            <person name="Yoshikawa M."/>
            <person name="Fukuda S."/>
            <person name="Kobayashi T."/>
            <person name="Kobayashi M."/>
            <person name="Okazaki T."/>
            <person name="Ohara I."/>
            <person name="Nakayama I."/>
        </authorList>
    </citation>
    <scope>NUCLEOTIDE SEQUENCE [LARGE SCALE GENOMIC DNA]</scope>
    <source>
        <strain>U-51</strain>
    </source>
</reference>
<name>RK14_PYRYE</name>
<geneLocation type="chloroplast"/>
<proteinExistence type="inferred from homology"/>
<gene>
    <name evidence="1" type="primary">rpl14</name>
</gene>
<organism>
    <name type="scientific">Pyropia yezoensis</name>
    <name type="common">Susabi-nori</name>
    <name type="synonym">Porphyra yezoensis</name>
    <dbReference type="NCBI Taxonomy" id="2788"/>
    <lineage>
        <taxon>Eukaryota</taxon>
        <taxon>Rhodophyta</taxon>
        <taxon>Bangiophyceae</taxon>
        <taxon>Bangiales</taxon>
        <taxon>Bangiaceae</taxon>
        <taxon>Pyropia</taxon>
    </lineage>
</organism>
<comment type="function">
    <text evidence="1">Binds to 23S rRNA.</text>
</comment>
<comment type="subunit">
    <text evidence="1">Part of the 50S ribosomal subunit.</text>
</comment>
<comment type="subcellular location">
    <subcellularLocation>
        <location>Plastid</location>
        <location>Chloroplast</location>
    </subcellularLocation>
</comment>
<comment type="similarity">
    <text evidence="1">Belongs to the universal ribosomal protein uL14 family.</text>
</comment>
<feature type="chain" id="PRO_0000276375" description="Large ribosomal subunit protein uL14c">
    <location>
        <begin position="1"/>
        <end position="122"/>
    </location>
</feature>
<dbReference type="EMBL" id="DQ995202">
    <property type="protein sequence ID" value="ABJ91317.1"/>
    <property type="molecule type" value="Genomic_DNA"/>
</dbReference>
<dbReference type="EMBL" id="AP006715">
    <property type="protein sequence ID" value="BAE92427.1"/>
    <property type="molecule type" value="Genomic_DNA"/>
</dbReference>
<dbReference type="RefSeq" id="YP_536984.1">
    <property type="nucleotide sequence ID" value="NC_007932.1"/>
</dbReference>
<dbReference type="SMR" id="Q1XDI4"/>
<dbReference type="GeneID" id="3978939"/>
<dbReference type="GO" id="GO:0009507">
    <property type="term" value="C:chloroplast"/>
    <property type="evidence" value="ECO:0007669"/>
    <property type="project" value="UniProtKB-SubCell"/>
</dbReference>
<dbReference type="GO" id="GO:0022625">
    <property type="term" value="C:cytosolic large ribosomal subunit"/>
    <property type="evidence" value="ECO:0007669"/>
    <property type="project" value="TreeGrafter"/>
</dbReference>
<dbReference type="GO" id="GO:0070180">
    <property type="term" value="F:large ribosomal subunit rRNA binding"/>
    <property type="evidence" value="ECO:0007669"/>
    <property type="project" value="TreeGrafter"/>
</dbReference>
<dbReference type="GO" id="GO:0003735">
    <property type="term" value="F:structural constituent of ribosome"/>
    <property type="evidence" value="ECO:0007669"/>
    <property type="project" value="InterPro"/>
</dbReference>
<dbReference type="GO" id="GO:0006412">
    <property type="term" value="P:translation"/>
    <property type="evidence" value="ECO:0007669"/>
    <property type="project" value="UniProtKB-UniRule"/>
</dbReference>
<dbReference type="CDD" id="cd00337">
    <property type="entry name" value="Ribosomal_uL14"/>
    <property type="match status" value="1"/>
</dbReference>
<dbReference type="FunFam" id="2.40.150.20:FF:000001">
    <property type="entry name" value="50S ribosomal protein L14"/>
    <property type="match status" value="1"/>
</dbReference>
<dbReference type="Gene3D" id="2.40.150.20">
    <property type="entry name" value="Ribosomal protein L14"/>
    <property type="match status" value="1"/>
</dbReference>
<dbReference type="HAMAP" id="MF_01367">
    <property type="entry name" value="Ribosomal_uL14"/>
    <property type="match status" value="1"/>
</dbReference>
<dbReference type="InterPro" id="IPR000218">
    <property type="entry name" value="Ribosomal_uL14"/>
</dbReference>
<dbReference type="InterPro" id="IPR005745">
    <property type="entry name" value="Ribosomal_uL14_bac-type"/>
</dbReference>
<dbReference type="InterPro" id="IPR019972">
    <property type="entry name" value="Ribosomal_uL14_CS"/>
</dbReference>
<dbReference type="InterPro" id="IPR036853">
    <property type="entry name" value="Ribosomal_uL14_sf"/>
</dbReference>
<dbReference type="NCBIfam" id="TIGR01067">
    <property type="entry name" value="rplN_bact"/>
    <property type="match status" value="1"/>
</dbReference>
<dbReference type="PANTHER" id="PTHR11761">
    <property type="entry name" value="50S/60S RIBOSOMAL PROTEIN L14/L23"/>
    <property type="match status" value="1"/>
</dbReference>
<dbReference type="PANTHER" id="PTHR11761:SF3">
    <property type="entry name" value="LARGE RIBOSOMAL SUBUNIT PROTEIN UL14M"/>
    <property type="match status" value="1"/>
</dbReference>
<dbReference type="Pfam" id="PF00238">
    <property type="entry name" value="Ribosomal_L14"/>
    <property type="match status" value="1"/>
</dbReference>
<dbReference type="SMART" id="SM01374">
    <property type="entry name" value="Ribosomal_L14"/>
    <property type="match status" value="1"/>
</dbReference>
<dbReference type="SUPFAM" id="SSF50193">
    <property type="entry name" value="Ribosomal protein L14"/>
    <property type="match status" value="1"/>
</dbReference>
<dbReference type="PROSITE" id="PS00049">
    <property type="entry name" value="RIBOSOMAL_L14"/>
    <property type="match status" value="1"/>
</dbReference>
<accession>Q1XDI4</accession>
<evidence type="ECO:0000255" key="1">
    <source>
        <dbReference type="HAMAP-Rule" id="MF_01367"/>
    </source>
</evidence>
<evidence type="ECO:0000305" key="2"/>
<sequence length="122" mass="13326">MIQTQSYLNVADNSGARKIMCIRVLGTSNPSYASIGDVIIGVVKDASPNMPVKRSDVVRAVVVRTRKALRRTDGMSIRFGDNAAVIINQDNNPRGTRVFGPIARELRDKNFSKIVSLAPEVV</sequence>
<protein>
    <recommendedName>
        <fullName evidence="1">Large ribosomal subunit protein uL14c</fullName>
    </recommendedName>
    <alternativeName>
        <fullName evidence="2">50S ribosomal protein L14, chloroplastic</fullName>
    </alternativeName>
</protein>
<keyword id="KW-0150">Chloroplast</keyword>
<keyword id="KW-0934">Plastid</keyword>
<keyword id="KW-0687">Ribonucleoprotein</keyword>
<keyword id="KW-0689">Ribosomal protein</keyword>
<keyword id="KW-0694">RNA-binding</keyword>
<keyword id="KW-0699">rRNA-binding</keyword>